<evidence type="ECO:0000255" key="1"/>
<evidence type="ECO:0000305" key="2"/>
<reference key="1">
    <citation type="journal article" date="2005" name="Nature">
        <title>The genome of the social amoeba Dictyostelium discoideum.</title>
        <authorList>
            <person name="Eichinger L."/>
            <person name="Pachebat J.A."/>
            <person name="Gloeckner G."/>
            <person name="Rajandream M.A."/>
            <person name="Sucgang R."/>
            <person name="Berriman M."/>
            <person name="Song J."/>
            <person name="Olsen R."/>
            <person name="Szafranski K."/>
            <person name="Xu Q."/>
            <person name="Tunggal B."/>
            <person name="Kummerfeld S."/>
            <person name="Madera M."/>
            <person name="Konfortov B.A."/>
            <person name="Rivero F."/>
            <person name="Bankier A.T."/>
            <person name="Lehmann R."/>
            <person name="Hamlin N."/>
            <person name="Davies R."/>
            <person name="Gaudet P."/>
            <person name="Fey P."/>
            <person name="Pilcher K."/>
            <person name="Chen G."/>
            <person name="Saunders D."/>
            <person name="Sodergren E.J."/>
            <person name="Davis P."/>
            <person name="Kerhornou A."/>
            <person name="Nie X."/>
            <person name="Hall N."/>
            <person name="Anjard C."/>
            <person name="Hemphill L."/>
            <person name="Bason N."/>
            <person name="Farbrother P."/>
            <person name="Desany B."/>
            <person name="Just E."/>
            <person name="Morio T."/>
            <person name="Rost R."/>
            <person name="Churcher C.M."/>
            <person name="Cooper J."/>
            <person name="Haydock S."/>
            <person name="van Driessche N."/>
            <person name="Cronin A."/>
            <person name="Goodhead I."/>
            <person name="Muzny D.M."/>
            <person name="Mourier T."/>
            <person name="Pain A."/>
            <person name="Lu M."/>
            <person name="Harper D."/>
            <person name="Lindsay R."/>
            <person name="Hauser H."/>
            <person name="James K.D."/>
            <person name="Quiles M."/>
            <person name="Madan Babu M."/>
            <person name="Saito T."/>
            <person name="Buchrieser C."/>
            <person name="Wardroper A."/>
            <person name="Felder M."/>
            <person name="Thangavelu M."/>
            <person name="Johnson D."/>
            <person name="Knights A."/>
            <person name="Loulseged H."/>
            <person name="Mungall K.L."/>
            <person name="Oliver K."/>
            <person name="Price C."/>
            <person name="Quail M.A."/>
            <person name="Urushihara H."/>
            <person name="Hernandez J."/>
            <person name="Rabbinowitsch E."/>
            <person name="Steffen D."/>
            <person name="Sanders M."/>
            <person name="Ma J."/>
            <person name="Kohara Y."/>
            <person name="Sharp S."/>
            <person name="Simmonds M.N."/>
            <person name="Spiegler S."/>
            <person name="Tivey A."/>
            <person name="Sugano S."/>
            <person name="White B."/>
            <person name="Walker D."/>
            <person name="Woodward J.R."/>
            <person name="Winckler T."/>
            <person name="Tanaka Y."/>
            <person name="Shaulsky G."/>
            <person name="Schleicher M."/>
            <person name="Weinstock G.M."/>
            <person name="Rosenthal A."/>
            <person name="Cox E.C."/>
            <person name="Chisholm R.L."/>
            <person name="Gibbs R.A."/>
            <person name="Loomis W.F."/>
            <person name="Platzer M."/>
            <person name="Kay R.R."/>
            <person name="Williams J.G."/>
            <person name="Dear P.H."/>
            <person name="Noegel A.A."/>
            <person name="Barrell B.G."/>
            <person name="Kuspa A."/>
        </authorList>
    </citation>
    <scope>NUCLEOTIDE SEQUENCE [LARGE SCALE GENOMIC DNA]</scope>
    <source>
        <strain>AX4</strain>
    </source>
</reference>
<name>Y6048_DICDI</name>
<organism>
    <name type="scientific">Dictyostelium discoideum</name>
    <name type="common">Social amoeba</name>
    <dbReference type="NCBI Taxonomy" id="44689"/>
    <lineage>
        <taxon>Eukaryota</taxon>
        <taxon>Amoebozoa</taxon>
        <taxon>Evosea</taxon>
        <taxon>Eumycetozoa</taxon>
        <taxon>Dictyostelia</taxon>
        <taxon>Dictyosteliales</taxon>
        <taxon>Dictyosteliaceae</taxon>
        <taxon>Dictyostelium</taxon>
    </lineage>
</organism>
<proteinExistence type="predicted"/>
<gene>
    <name type="ORF">DDB_G0288997</name>
</gene>
<comment type="subcellular location">
    <subcellularLocation>
        <location evidence="2">Membrane</location>
        <topology evidence="2">Single-pass membrane protein</topology>
    </subcellularLocation>
</comment>
<comment type="sequence caution" evidence="2">
    <conflict type="erroneous gene model prediction">
        <sequence resource="EMBL-CDS" id="EAL62952"/>
    </conflict>
</comment>
<comment type="sequence caution" evidence="2">
    <conflict type="erroneous gene model prediction">
        <sequence resource="EMBL-CDS" id="EAL62953"/>
    </conflict>
</comment>
<protein>
    <recommendedName>
        <fullName>Putative uncharacterized transmembrane protein DDB_G0288997</fullName>
    </recommendedName>
</protein>
<keyword id="KW-0472">Membrane</keyword>
<keyword id="KW-1185">Reference proteome</keyword>
<keyword id="KW-0812">Transmembrane</keyword>
<keyword id="KW-1133">Transmembrane helix</keyword>
<feature type="chain" id="PRO_0000346965" description="Putative uncharacterized transmembrane protein DDB_G0288997">
    <location>
        <begin position="1"/>
        <end position="202"/>
    </location>
</feature>
<feature type="transmembrane region" description="Helical" evidence="1">
    <location>
        <begin position="175"/>
        <end position="195"/>
    </location>
</feature>
<dbReference type="EMBL" id="AAFI02000129">
    <property type="protein sequence ID" value="EAL62952.1"/>
    <property type="status" value="ALT_SEQ"/>
    <property type="molecule type" value="Genomic_DNA"/>
</dbReference>
<dbReference type="EMBL" id="AAFI02000129">
    <property type="protein sequence ID" value="EAL62953.1"/>
    <property type="status" value="ALT_SEQ"/>
    <property type="molecule type" value="Genomic_DNA"/>
</dbReference>
<dbReference type="RefSeq" id="XP_636455.1">
    <property type="nucleotide sequence ID" value="XM_631363.1"/>
</dbReference>
<dbReference type="RefSeq" id="XP_636456.1">
    <property type="nucleotide sequence ID" value="XM_631364.1"/>
</dbReference>
<dbReference type="SMR" id="Q54I54"/>
<dbReference type="FunCoup" id="Q54I54">
    <property type="interactions" value="435"/>
</dbReference>
<dbReference type="PaxDb" id="44689-DDB0216048"/>
<dbReference type="EnsemblProtists" id="EAL62952">
    <property type="protein sequence ID" value="EAL62952"/>
    <property type="gene ID" value="DDB_G0288995"/>
</dbReference>
<dbReference type="EnsemblProtists" id="EAL62953">
    <property type="protein sequence ID" value="EAL62953"/>
    <property type="gene ID" value="DDB_G0288997"/>
</dbReference>
<dbReference type="GeneID" id="8626908"/>
<dbReference type="KEGG" id="ddi:DDB_G0288995"/>
<dbReference type="KEGG" id="ddi:DDB_G0288997"/>
<dbReference type="dictyBase" id="DDB_G0288997"/>
<dbReference type="VEuPathDB" id="AmoebaDB:DDB_G0288997"/>
<dbReference type="eggNOG" id="ENOG502RIPK">
    <property type="taxonomic scope" value="Eukaryota"/>
</dbReference>
<dbReference type="InParanoid" id="Q54I54"/>
<dbReference type="PRO" id="PR:Q54I54"/>
<dbReference type="Proteomes" id="UP000002195">
    <property type="component" value="Chromosome 5"/>
</dbReference>
<dbReference type="GO" id="GO:0016020">
    <property type="term" value="C:membrane"/>
    <property type="evidence" value="ECO:0007669"/>
    <property type="project" value="UniProtKB-SubCell"/>
</dbReference>
<accession>Q54I54</accession>
<accession>Q54I55</accession>
<sequence>MESMNNQEILNGTIEYVSRSSKLLKKVSDITKEKIKDYPYLDDLTEEYIQAQHLYDRTPKLLKLLSEINITDAIISNEVIENINNMKYELDHLIESTQFRIDDIDTYFKRVETEYFLKDKKNEFYVELSSYNSQIQDSLKKLKSIYDGGKLLTKEVSEINRKKFKNSDKVLTKHINTGIALFIILTSLLVYFIQFKPKISQD</sequence>